<proteinExistence type="inferred from homology"/>
<sequence>MAVQGSQRRLLGSLNSTPTAIPQLGLAANQTGARCLEVSIPDGLFLSLGLVSLVENVLVVATIAKNRNLHSPMYCFICCLALSDLLVSGSNVVDTLLLLLEAGALAARAAVLQQLDNVIDVITCSSMLSSLCFLGAIAVDRYISIFYALRYRSIVTLPRARRAVAAIWVASVLFSTLFIAYYDHTAVLLCLVVFFLAMLVLMAVLYVHMLARACQHAQGIARLHKRQRPVHKGFGLKGPVTLTILLGIFFLCWGPFFLHLTLIVLCPEHPTCGCIFKNFNLFLALIICNAIIDPLIYAFHSQELRRTLKEVLTCSW</sequence>
<name>MSHR_GORGO</name>
<accession>Q864K9</accession>
<accession>Q2KP11</accession>
<accession>Q2KP12</accession>
<comment type="function">
    <text evidence="1">Receptor for MSH (alpha, beta and gamma) and ACTH. The activity of this receptor is mediated by G proteins which activate adenylate cyclase. Mediates melanogenesis, the production of eumelanin (black/brown) and phaeomelanin (red/yellow), via regulation of cAMP signaling in melanocytes.</text>
</comment>
<comment type="subunit">
    <text evidence="1">Interacts with MGRN1, but does not undergo MGRN1-mediated ubiquitination; this interaction competes with GNAS-binding and thus inhibits agonist-induced cAMP production. Interacts with OPN3; the interaction results in a decrease in MC1R-mediated cAMP signaling and ultimately a decrease in melanin production in melanocytes.</text>
</comment>
<comment type="subcellular location">
    <subcellularLocation>
        <location evidence="1">Cell membrane</location>
        <topology evidence="2">Multi-pass membrane protein</topology>
    </subcellularLocation>
</comment>
<comment type="similarity">
    <text evidence="3">Belongs to the G-protein coupled receptor 1 family.</text>
</comment>
<evidence type="ECO:0000250" key="1">
    <source>
        <dbReference type="UniProtKB" id="Q01726"/>
    </source>
</evidence>
<evidence type="ECO:0000255" key="2"/>
<evidence type="ECO:0000255" key="3">
    <source>
        <dbReference type="PROSITE-ProRule" id="PRU00521"/>
    </source>
</evidence>
<evidence type="ECO:0000269" key="4">
    <source ref="2"/>
</evidence>
<dbReference type="EMBL" id="AY205088">
    <property type="protein sequence ID" value="AAP30962.1"/>
    <property type="molecule type" value="Genomic_DNA"/>
</dbReference>
<dbReference type="EMBL" id="AY875715">
    <property type="protein sequence ID" value="AAX82900.1"/>
    <property type="molecule type" value="Genomic_DNA"/>
</dbReference>
<dbReference type="EMBL" id="AY875716">
    <property type="protein sequence ID" value="AAX82901.1"/>
    <property type="molecule type" value="Genomic_DNA"/>
</dbReference>
<dbReference type="SMR" id="Q864K9"/>
<dbReference type="FunCoup" id="Q864K9">
    <property type="interactions" value="878"/>
</dbReference>
<dbReference type="STRING" id="9593.ENSGGOP00000019912"/>
<dbReference type="GlyCosmos" id="Q864K9">
    <property type="glycosylation" value="1 site, No reported glycans"/>
</dbReference>
<dbReference type="eggNOG" id="KOG1375">
    <property type="taxonomic scope" value="Eukaryota"/>
</dbReference>
<dbReference type="eggNOG" id="KOG3656">
    <property type="taxonomic scope" value="Eukaryota"/>
</dbReference>
<dbReference type="InParanoid" id="Q864K9"/>
<dbReference type="Proteomes" id="UP000001519">
    <property type="component" value="Unplaced"/>
</dbReference>
<dbReference type="GO" id="GO:0005737">
    <property type="term" value="C:cytoplasm"/>
    <property type="evidence" value="ECO:0000318"/>
    <property type="project" value="GO_Central"/>
</dbReference>
<dbReference type="GO" id="GO:0005886">
    <property type="term" value="C:plasma membrane"/>
    <property type="evidence" value="ECO:0000250"/>
    <property type="project" value="UniProtKB"/>
</dbReference>
<dbReference type="GO" id="GO:0004980">
    <property type="term" value="F:melanocyte-stimulating hormone receptor activity"/>
    <property type="evidence" value="ECO:0000318"/>
    <property type="project" value="GO_Central"/>
</dbReference>
<dbReference type="GO" id="GO:0007189">
    <property type="term" value="P:adenylate cyclase-activating G protein-coupled receptor signaling pathway"/>
    <property type="evidence" value="ECO:0000318"/>
    <property type="project" value="GO_Central"/>
</dbReference>
<dbReference type="GO" id="GO:0019222">
    <property type="term" value="P:regulation of metabolic process"/>
    <property type="evidence" value="ECO:0000318"/>
    <property type="project" value="GO_Central"/>
</dbReference>
<dbReference type="CDD" id="cd15351">
    <property type="entry name" value="7tmA_MC1R"/>
    <property type="match status" value="1"/>
</dbReference>
<dbReference type="FunFam" id="1.20.1070.10:FF:000211">
    <property type="entry name" value="Melanocyte-stimulating hormone receptor"/>
    <property type="match status" value="1"/>
</dbReference>
<dbReference type="Gene3D" id="1.20.1070.10">
    <property type="entry name" value="Rhodopsin 7-helix transmembrane proteins"/>
    <property type="match status" value="1"/>
</dbReference>
<dbReference type="InterPro" id="IPR000276">
    <property type="entry name" value="GPCR_Rhodpsn"/>
</dbReference>
<dbReference type="InterPro" id="IPR017452">
    <property type="entry name" value="GPCR_Rhodpsn_7TM"/>
</dbReference>
<dbReference type="InterPro" id="IPR001671">
    <property type="entry name" value="Melcrt_ACTH_rcpt"/>
</dbReference>
<dbReference type="InterPro" id="IPR000761">
    <property type="entry name" value="MSH_rcpt"/>
</dbReference>
<dbReference type="PANTHER" id="PTHR22750">
    <property type="entry name" value="G-PROTEIN COUPLED RECEPTOR"/>
    <property type="match status" value="1"/>
</dbReference>
<dbReference type="Pfam" id="PF00001">
    <property type="entry name" value="7tm_1"/>
    <property type="match status" value="2"/>
</dbReference>
<dbReference type="PRINTS" id="PR00237">
    <property type="entry name" value="GPCRRHODOPSN"/>
</dbReference>
<dbReference type="PRINTS" id="PR00534">
    <property type="entry name" value="MCRFAMILY"/>
</dbReference>
<dbReference type="PRINTS" id="PR00536">
    <property type="entry name" value="MELNOCYTESHR"/>
</dbReference>
<dbReference type="SMART" id="SM01381">
    <property type="entry name" value="7TM_GPCR_Srsx"/>
    <property type="match status" value="1"/>
</dbReference>
<dbReference type="SUPFAM" id="SSF81321">
    <property type="entry name" value="Family A G protein-coupled receptor-like"/>
    <property type="match status" value="1"/>
</dbReference>
<dbReference type="PROSITE" id="PS00237">
    <property type="entry name" value="G_PROTEIN_RECEP_F1_1"/>
    <property type="match status" value="1"/>
</dbReference>
<dbReference type="PROSITE" id="PS50262">
    <property type="entry name" value="G_PROTEIN_RECEP_F1_2"/>
    <property type="match status" value="1"/>
</dbReference>
<feature type="chain" id="PRO_0000069814" description="Melanocyte-stimulating hormone receptor">
    <location>
        <begin position="1"/>
        <end position="316"/>
    </location>
</feature>
<feature type="topological domain" description="Extracellular" evidence="2">
    <location>
        <begin position="1"/>
        <end position="37"/>
    </location>
</feature>
<feature type="transmembrane region" description="Helical; Name=1" evidence="2">
    <location>
        <begin position="38"/>
        <end position="63"/>
    </location>
</feature>
<feature type="topological domain" description="Cytoplasmic" evidence="2">
    <location>
        <begin position="64"/>
        <end position="72"/>
    </location>
</feature>
<feature type="transmembrane region" description="Helical; Name=2" evidence="2">
    <location>
        <begin position="73"/>
        <end position="93"/>
    </location>
</feature>
<feature type="topological domain" description="Extracellular" evidence="2">
    <location>
        <begin position="94"/>
        <end position="117"/>
    </location>
</feature>
<feature type="transmembrane region" description="Helical; Name=3" evidence="2">
    <location>
        <begin position="118"/>
        <end position="139"/>
    </location>
</feature>
<feature type="topological domain" description="Cytoplasmic" evidence="2">
    <location>
        <begin position="140"/>
        <end position="162"/>
    </location>
</feature>
<feature type="transmembrane region" description="Helical; Name=4" evidence="2">
    <location>
        <begin position="163"/>
        <end position="182"/>
    </location>
</feature>
<feature type="topological domain" description="Extracellular" evidence="2">
    <location>
        <begin position="183"/>
        <end position="190"/>
    </location>
</feature>
<feature type="transmembrane region" description="Helical; Name=5" evidence="2">
    <location>
        <begin position="191"/>
        <end position="210"/>
    </location>
</feature>
<feature type="topological domain" description="Cytoplasmic" evidence="2">
    <location>
        <begin position="211"/>
        <end position="239"/>
    </location>
</feature>
<feature type="transmembrane region" description="Helical; Name=6" evidence="2">
    <location>
        <begin position="240"/>
        <end position="265"/>
    </location>
</feature>
<feature type="topological domain" description="Extracellular" evidence="2">
    <location>
        <begin position="266"/>
        <end position="278"/>
    </location>
</feature>
<feature type="transmembrane region" description="Helical; Name=7" evidence="2">
    <location>
        <begin position="279"/>
        <end position="299"/>
    </location>
</feature>
<feature type="topological domain" description="Cytoplasmic" evidence="2">
    <location>
        <begin position="300"/>
        <end position="316"/>
    </location>
</feature>
<feature type="lipid moiety-binding region" description="S-palmitoyl cysteine" evidence="2">
    <location>
        <position position="314"/>
    </location>
</feature>
<feature type="glycosylation site" description="N-linked (GlcNAc...) asparagine" evidence="2">
    <location>
        <position position="29"/>
    </location>
</feature>
<feature type="sequence variant" id="VAR_028852" description="In Isolate Urko." evidence="4">
    <original>V</original>
    <variation>L</variation>
    <location>
        <position position="93"/>
    </location>
</feature>
<protein>
    <recommendedName>
        <fullName>Melanocyte-stimulating hormone receptor</fullName>
        <shortName>MSH-R</shortName>
    </recommendedName>
    <alternativeName>
        <fullName>Melanocortin receptor 1</fullName>
        <shortName>MC1-R</shortName>
    </alternativeName>
</protein>
<reference key="1">
    <citation type="journal article" date="2003" name="Am. J. Phys. Anthropol.">
        <title>Evolution of a pigmentation gene, the melanocortin-1 receptor, in primates.</title>
        <authorList>
            <person name="Mundy N.I."/>
            <person name="Kelly J."/>
        </authorList>
    </citation>
    <scope>NUCLEOTIDE SEQUENCE [GENOMIC DNA]</scope>
    <source>
        <strain>Isolate 1</strain>
    </source>
</reference>
<reference key="2">
    <citation type="submission" date="2005-01" db="EMBL/GenBank/DDBJ databases">
        <title>Analysis of 5' upstream regulatory sequences and LCR-like region of the Gorilla tyrosinase locus.</title>
        <authorList>
            <person name="Roy R."/>
            <person name="Cantero M."/>
            <person name="Jimenez-Cervantes C."/>
            <person name="Garcia-Borron J.C."/>
            <person name="Montoliu L."/>
        </authorList>
    </citation>
    <scope>NUCLEOTIDE SEQUENCE [GENOMIC DNA]</scope>
    <scope>VARIANT LEU-93</scope>
    <source>
        <strain>Isolate Snowflake</strain>
        <strain>Isolate Urko</strain>
    </source>
</reference>
<keyword id="KW-1003">Cell membrane</keyword>
<keyword id="KW-0297">G-protein coupled receptor</keyword>
<keyword id="KW-0325">Glycoprotein</keyword>
<keyword id="KW-0449">Lipoprotein</keyword>
<keyword id="KW-0472">Membrane</keyword>
<keyword id="KW-0564">Palmitate</keyword>
<keyword id="KW-0675">Receptor</keyword>
<keyword id="KW-1185">Reference proteome</keyword>
<keyword id="KW-0807">Transducer</keyword>
<keyword id="KW-0812">Transmembrane</keyword>
<keyword id="KW-1133">Transmembrane helix</keyword>
<gene>
    <name type="primary">MC1R</name>
</gene>
<organism>
    <name type="scientific">Gorilla gorilla gorilla</name>
    <name type="common">Western lowland gorilla</name>
    <dbReference type="NCBI Taxonomy" id="9595"/>
    <lineage>
        <taxon>Eukaryota</taxon>
        <taxon>Metazoa</taxon>
        <taxon>Chordata</taxon>
        <taxon>Craniata</taxon>
        <taxon>Vertebrata</taxon>
        <taxon>Euteleostomi</taxon>
        <taxon>Mammalia</taxon>
        <taxon>Eutheria</taxon>
        <taxon>Euarchontoglires</taxon>
        <taxon>Primates</taxon>
        <taxon>Haplorrhini</taxon>
        <taxon>Catarrhini</taxon>
        <taxon>Hominidae</taxon>
        <taxon>Gorilla</taxon>
    </lineage>
</organism>